<organism>
    <name type="scientific">Caulobacter vibrioides (strain ATCC 19089 / CIP 103742 / CB 15)</name>
    <name type="common">Caulobacter crescentus</name>
    <dbReference type="NCBI Taxonomy" id="190650"/>
    <lineage>
        <taxon>Bacteria</taxon>
        <taxon>Pseudomonadati</taxon>
        <taxon>Pseudomonadota</taxon>
        <taxon>Alphaproteobacteria</taxon>
        <taxon>Caulobacterales</taxon>
        <taxon>Caulobacteraceae</taxon>
        <taxon>Caulobacter</taxon>
    </lineage>
</organism>
<protein>
    <recommendedName>
        <fullName evidence="1">Apolipoprotein N-acyltransferase</fullName>
        <shortName evidence="1">ALP N-acyltransferase</shortName>
        <ecNumber evidence="1">2.3.1.269</ecNumber>
    </recommendedName>
</protein>
<name>LNT_CAUVC</name>
<accession>Q9AC16</accession>
<feature type="chain" id="PRO_0000178054" description="Apolipoprotein N-acyltransferase">
    <location>
        <begin position="1"/>
        <end position="530"/>
    </location>
</feature>
<feature type="transmembrane region" description="Helical" evidence="1">
    <location>
        <begin position="19"/>
        <end position="39"/>
    </location>
</feature>
<feature type="transmembrane region" description="Helical" evidence="1">
    <location>
        <begin position="65"/>
        <end position="85"/>
    </location>
</feature>
<feature type="transmembrane region" description="Helical" evidence="1">
    <location>
        <begin position="96"/>
        <end position="116"/>
    </location>
</feature>
<feature type="transmembrane region" description="Helical" evidence="1">
    <location>
        <begin position="128"/>
        <end position="148"/>
    </location>
</feature>
<feature type="transmembrane region" description="Helical" evidence="1">
    <location>
        <begin position="169"/>
        <end position="189"/>
    </location>
</feature>
<feature type="transmembrane region" description="Helical" evidence="1">
    <location>
        <begin position="197"/>
        <end position="217"/>
    </location>
</feature>
<feature type="domain" description="CN hydrolase" evidence="1">
    <location>
        <begin position="232"/>
        <end position="485"/>
    </location>
</feature>
<feature type="active site" description="Proton acceptor" evidence="1">
    <location>
        <position position="274"/>
    </location>
</feature>
<feature type="active site" evidence="1">
    <location>
        <position position="343"/>
    </location>
</feature>
<feature type="active site" description="Nucleophile" evidence="1">
    <location>
        <position position="396"/>
    </location>
</feature>
<evidence type="ECO:0000255" key="1">
    <source>
        <dbReference type="HAMAP-Rule" id="MF_01148"/>
    </source>
</evidence>
<comment type="function">
    <text evidence="1">Catalyzes the phospholipid dependent N-acylation of the N-terminal cysteine of apolipoprotein, the last step in lipoprotein maturation.</text>
</comment>
<comment type="catalytic activity">
    <reaction evidence="1">
        <text>N-terminal S-1,2-diacyl-sn-glyceryl-L-cysteinyl-[lipoprotein] + a glycerophospholipid = N-acyl-S-1,2-diacyl-sn-glyceryl-L-cysteinyl-[lipoprotein] + a 2-acyl-sn-glycero-3-phospholipid + H(+)</text>
        <dbReference type="Rhea" id="RHEA:48228"/>
        <dbReference type="Rhea" id="RHEA-COMP:14681"/>
        <dbReference type="Rhea" id="RHEA-COMP:14684"/>
        <dbReference type="ChEBI" id="CHEBI:15378"/>
        <dbReference type="ChEBI" id="CHEBI:136912"/>
        <dbReference type="ChEBI" id="CHEBI:140656"/>
        <dbReference type="ChEBI" id="CHEBI:140657"/>
        <dbReference type="ChEBI" id="CHEBI:140660"/>
        <dbReference type="EC" id="2.3.1.269"/>
    </reaction>
</comment>
<comment type="pathway">
    <text evidence="1">Protein modification; lipoprotein biosynthesis (N-acyl transfer).</text>
</comment>
<comment type="subcellular location">
    <subcellularLocation>
        <location evidence="1">Cell inner membrane</location>
        <topology evidence="1">Multi-pass membrane protein</topology>
    </subcellularLocation>
</comment>
<comment type="similarity">
    <text evidence="1">Belongs to the CN hydrolase family. Apolipoprotein N-acyltransferase subfamily.</text>
</comment>
<keyword id="KW-0012">Acyltransferase</keyword>
<keyword id="KW-0997">Cell inner membrane</keyword>
<keyword id="KW-1003">Cell membrane</keyword>
<keyword id="KW-0472">Membrane</keyword>
<keyword id="KW-1185">Reference proteome</keyword>
<keyword id="KW-0808">Transferase</keyword>
<keyword id="KW-0812">Transmembrane</keyword>
<keyword id="KW-1133">Transmembrane helix</keyword>
<sequence length="530" mass="56423">MIAWTRFRERPWSGPALALIAGLAAALAHPPFGVLPGLLGYAGLLHLLDNADVQRPLRSVFWRGWLAGVGYFGLGTWWVGEAFLVDAATHGWMAPFAVTGMAAGLALFWGLAALLYRALRPASAWRVLTFAGAFAALEWMRGHVLTGFPWNLPGETWKAGSAPSQLAALVGAYGLTWITLAIAGAPAVWRQGRGGRAATGLAVASLIGLYGYGAIALSRPLSPSGPTTVRIVQADIKQDLKWDAERFAQIVQAYVSLTATPYAAKPADIVIWPEGALPAAVNDYLAPGTWVRQAIVDSLAPGQLLLIGGYRYEGAGPHPTYYNSLVALRRTETDLELVGIYDKHRLVPFGEYLPADRFLTVIGFKSLARLSDNFTTGPTPAPLRISPELLVQPLICYESLFPGLAKPDPNVRALINVSNDAWFGVTSGPPQHLNLASYRAIESAKPILRATPTGISAVVDARGRIVPGASLGLGESGVIDAQIPGMGQVTPYDNFGDVAFLALILISGVVSARVRIGKISSSIAPKRKLS</sequence>
<proteinExistence type="inferred from homology"/>
<reference key="1">
    <citation type="journal article" date="2001" name="Proc. Natl. Acad. Sci. U.S.A.">
        <title>Complete genome sequence of Caulobacter crescentus.</title>
        <authorList>
            <person name="Nierman W.C."/>
            <person name="Feldblyum T.V."/>
            <person name="Laub M.T."/>
            <person name="Paulsen I.T."/>
            <person name="Nelson K.E."/>
            <person name="Eisen J.A."/>
            <person name="Heidelberg J.F."/>
            <person name="Alley M.R.K."/>
            <person name="Ohta N."/>
            <person name="Maddock J.R."/>
            <person name="Potocka I."/>
            <person name="Nelson W.C."/>
            <person name="Newton A."/>
            <person name="Stephens C."/>
            <person name="Phadke N.D."/>
            <person name="Ely B."/>
            <person name="DeBoy R.T."/>
            <person name="Dodson R.J."/>
            <person name="Durkin A.S."/>
            <person name="Gwinn M.L."/>
            <person name="Haft D.H."/>
            <person name="Kolonay J.F."/>
            <person name="Smit J."/>
            <person name="Craven M.B."/>
            <person name="Khouri H.M."/>
            <person name="Shetty J."/>
            <person name="Berry K.J."/>
            <person name="Utterback T.R."/>
            <person name="Tran K."/>
            <person name="Wolf A.M."/>
            <person name="Vamathevan J.J."/>
            <person name="Ermolaeva M.D."/>
            <person name="White O."/>
            <person name="Salzberg S.L."/>
            <person name="Venter J.C."/>
            <person name="Shapiro L."/>
            <person name="Fraser C.M."/>
        </authorList>
    </citation>
    <scope>NUCLEOTIDE SEQUENCE [LARGE SCALE GENOMIC DNA]</scope>
    <source>
        <strain>ATCC 19089 / CIP 103742 / CB 15</strain>
    </source>
</reference>
<dbReference type="EC" id="2.3.1.269" evidence="1"/>
<dbReference type="EMBL" id="AE005673">
    <property type="protein sequence ID" value="AAK22040.1"/>
    <property type="molecule type" value="Genomic_DNA"/>
</dbReference>
<dbReference type="PIR" id="D87255">
    <property type="entry name" value="D87255"/>
</dbReference>
<dbReference type="RefSeq" id="NP_418872.1">
    <property type="nucleotide sequence ID" value="NC_002696.2"/>
</dbReference>
<dbReference type="RefSeq" id="WP_010917942.1">
    <property type="nucleotide sequence ID" value="NC_002696.2"/>
</dbReference>
<dbReference type="SMR" id="Q9AC16"/>
<dbReference type="STRING" id="190650.CC_0052"/>
<dbReference type="EnsemblBacteria" id="AAK22040">
    <property type="protein sequence ID" value="AAK22040"/>
    <property type="gene ID" value="CC_0052"/>
</dbReference>
<dbReference type="KEGG" id="ccr:CC_0052"/>
<dbReference type="PATRIC" id="fig|190650.5.peg.50"/>
<dbReference type="eggNOG" id="COG0815">
    <property type="taxonomic scope" value="Bacteria"/>
</dbReference>
<dbReference type="HOGENOM" id="CLU_019563_3_1_5"/>
<dbReference type="BioCyc" id="CAULO:CC0052-MONOMER"/>
<dbReference type="UniPathway" id="UPA00666"/>
<dbReference type="Proteomes" id="UP000001816">
    <property type="component" value="Chromosome"/>
</dbReference>
<dbReference type="GO" id="GO:0005886">
    <property type="term" value="C:plasma membrane"/>
    <property type="evidence" value="ECO:0007669"/>
    <property type="project" value="UniProtKB-SubCell"/>
</dbReference>
<dbReference type="GO" id="GO:0016410">
    <property type="term" value="F:N-acyltransferase activity"/>
    <property type="evidence" value="ECO:0007669"/>
    <property type="project" value="UniProtKB-UniRule"/>
</dbReference>
<dbReference type="GO" id="GO:0042158">
    <property type="term" value="P:lipoprotein biosynthetic process"/>
    <property type="evidence" value="ECO:0007669"/>
    <property type="project" value="UniProtKB-UniRule"/>
</dbReference>
<dbReference type="CDD" id="cd07571">
    <property type="entry name" value="ALP_N-acyl_transferase"/>
    <property type="match status" value="1"/>
</dbReference>
<dbReference type="Gene3D" id="3.60.110.10">
    <property type="entry name" value="Carbon-nitrogen hydrolase"/>
    <property type="match status" value="1"/>
</dbReference>
<dbReference type="HAMAP" id="MF_01148">
    <property type="entry name" value="Lnt"/>
    <property type="match status" value="1"/>
</dbReference>
<dbReference type="InterPro" id="IPR004563">
    <property type="entry name" value="Apolipo_AcylTrfase"/>
</dbReference>
<dbReference type="InterPro" id="IPR003010">
    <property type="entry name" value="C-N_Hydrolase"/>
</dbReference>
<dbReference type="InterPro" id="IPR036526">
    <property type="entry name" value="C-N_Hydrolase_sf"/>
</dbReference>
<dbReference type="InterPro" id="IPR045378">
    <property type="entry name" value="LNT_N"/>
</dbReference>
<dbReference type="NCBIfam" id="TIGR00546">
    <property type="entry name" value="lnt"/>
    <property type="match status" value="1"/>
</dbReference>
<dbReference type="PANTHER" id="PTHR38686">
    <property type="entry name" value="APOLIPOPROTEIN N-ACYLTRANSFERASE"/>
    <property type="match status" value="1"/>
</dbReference>
<dbReference type="PANTHER" id="PTHR38686:SF1">
    <property type="entry name" value="APOLIPOPROTEIN N-ACYLTRANSFERASE"/>
    <property type="match status" value="1"/>
</dbReference>
<dbReference type="Pfam" id="PF00795">
    <property type="entry name" value="CN_hydrolase"/>
    <property type="match status" value="1"/>
</dbReference>
<dbReference type="Pfam" id="PF20154">
    <property type="entry name" value="LNT_N"/>
    <property type="match status" value="1"/>
</dbReference>
<dbReference type="SUPFAM" id="SSF56317">
    <property type="entry name" value="Carbon-nitrogen hydrolase"/>
    <property type="match status" value="1"/>
</dbReference>
<dbReference type="PROSITE" id="PS50263">
    <property type="entry name" value="CN_HYDROLASE"/>
    <property type="match status" value="1"/>
</dbReference>
<gene>
    <name evidence="1" type="primary">lnt</name>
    <name type="ordered locus">CC_0052</name>
</gene>